<sequence length="153" mass="18024">MRCPSCSHNGTRVLDSRPVDEGRSIRRRRECESCLSRFTTFERVEESPLIVVKKEGTREEFNKEKILRGLIKACEKRPVSLRQLEEVTQSVERELRNLGISEVKSDMIGEIVMEELRDIDDVAYVRFASVYRQFKDLNVFIEELKDILQKERE</sequence>
<accession>Q72ZF7</accession>
<proteinExistence type="inferred from homology"/>
<gene>
    <name evidence="1" type="primary">nrdR</name>
    <name type="ordered locus">BCE_4711</name>
</gene>
<name>NRDR_BACC1</name>
<feature type="chain" id="PRO_0000182260" description="Transcriptional repressor NrdR">
    <location>
        <begin position="1"/>
        <end position="153"/>
    </location>
</feature>
<feature type="domain" description="ATP-cone" evidence="1">
    <location>
        <begin position="49"/>
        <end position="139"/>
    </location>
</feature>
<feature type="zinc finger region" evidence="1">
    <location>
        <begin position="3"/>
        <end position="34"/>
    </location>
</feature>
<protein>
    <recommendedName>
        <fullName evidence="1">Transcriptional repressor NrdR</fullName>
    </recommendedName>
</protein>
<reference key="1">
    <citation type="journal article" date="2004" name="Nucleic Acids Res.">
        <title>The genome sequence of Bacillus cereus ATCC 10987 reveals metabolic adaptations and a large plasmid related to Bacillus anthracis pXO1.</title>
        <authorList>
            <person name="Rasko D.A."/>
            <person name="Ravel J."/>
            <person name="Oekstad O.A."/>
            <person name="Helgason E."/>
            <person name="Cer R.Z."/>
            <person name="Jiang L."/>
            <person name="Shores K.A."/>
            <person name="Fouts D.E."/>
            <person name="Tourasse N.J."/>
            <person name="Angiuoli S.V."/>
            <person name="Kolonay J.F."/>
            <person name="Nelson W.C."/>
            <person name="Kolstoe A.-B."/>
            <person name="Fraser C.M."/>
            <person name="Read T.D."/>
        </authorList>
    </citation>
    <scope>NUCLEOTIDE SEQUENCE [LARGE SCALE GENOMIC DNA]</scope>
    <source>
        <strain>ATCC 10987 / NRS 248</strain>
    </source>
</reference>
<dbReference type="EMBL" id="AE017194">
    <property type="protein sequence ID" value="AAS43612.1"/>
    <property type="molecule type" value="Genomic_DNA"/>
</dbReference>
<dbReference type="SMR" id="Q72ZF7"/>
<dbReference type="KEGG" id="bca:BCE_4711"/>
<dbReference type="HOGENOM" id="CLU_108412_0_0_9"/>
<dbReference type="Proteomes" id="UP000002527">
    <property type="component" value="Chromosome"/>
</dbReference>
<dbReference type="GO" id="GO:0005524">
    <property type="term" value="F:ATP binding"/>
    <property type="evidence" value="ECO:0007669"/>
    <property type="project" value="UniProtKB-KW"/>
</dbReference>
<dbReference type="GO" id="GO:0003677">
    <property type="term" value="F:DNA binding"/>
    <property type="evidence" value="ECO:0007669"/>
    <property type="project" value="UniProtKB-KW"/>
</dbReference>
<dbReference type="GO" id="GO:0008270">
    <property type="term" value="F:zinc ion binding"/>
    <property type="evidence" value="ECO:0007669"/>
    <property type="project" value="UniProtKB-UniRule"/>
</dbReference>
<dbReference type="GO" id="GO:0045892">
    <property type="term" value="P:negative regulation of DNA-templated transcription"/>
    <property type="evidence" value="ECO:0007669"/>
    <property type="project" value="UniProtKB-UniRule"/>
</dbReference>
<dbReference type="HAMAP" id="MF_00440">
    <property type="entry name" value="NrdR"/>
    <property type="match status" value="1"/>
</dbReference>
<dbReference type="InterPro" id="IPR005144">
    <property type="entry name" value="ATP-cone_dom"/>
</dbReference>
<dbReference type="InterPro" id="IPR055173">
    <property type="entry name" value="NrdR-like_N"/>
</dbReference>
<dbReference type="InterPro" id="IPR003796">
    <property type="entry name" value="RNR_NrdR-like"/>
</dbReference>
<dbReference type="NCBIfam" id="TIGR00244">
    <property type="entry name" value="transcriptional regulator NrdR"/>
    <property type="match status" value="1"/>
</dbReference>
<dbReference type="PANTHER" id="PTHR30455">
    <property type="entry name" value="TRANSCRIPTIONAL REPRESSOR NRDR"/>
    <property type="match status" value="1"/>
</dbReference>
<dbReference type="PANTHER" id="PTHR30455:SF2">
    <property type="entry name" value="TRANSCRIPTIONAL REPRESSOR NRDR"/>
    <property type="match status" value="1"/>
</dbReference>
<dbReference type="Pfam" id="PF03477">
    <property type="entry name" value="ATP-cone"/>
    <property type="match status" value="1"/>
</dbReference>
<dbReference type="Pfam" id="PF22811">
    <property type="entry name" value="Zn_ribbon_NrdR"/>
    <property type="match status" value="1"/>
</dbReference>
<dbReference type="PROSITE" id="PS51161">
    <property type="entry name" value="ATP_CONE"/>
    <property type="match status" value="1"/>
</dbReference>
<comment type="function">
    <text evidence="1">Negatively regulates transcription of bacterial ribonucleotide reductase nrd genes and operons by binding to NrdR-boxes.</text>
</comment>
<comment type="cofactor">
    <cofactor evidence="1">
        <name>Zn(2+)</name>
        <dbReference type="ChEBI" id="CHEBI:29105"/>
    </cofactor>
    <text evidence="1">Binds 1 zinc ion.</text>
</comment>
<comment type="similarity">
    <text evidence="1">Belongs to the NrdR family.</text>
</comment>
<organism>
    <name type="scientific">Bacillus cereus (strain ATCC 10987 / NRS 248)</name>
    <dbReference type="NCBI Taxonomy" id="222523"/>
    <lineage>
        <taxon>Bacteria</taxon>
        <taxon>Bacillati</taxon>
        <taxon>Bacillota</taxon>
        <taxon>Bacilli</taxon>
        <taxon>Bacillales</taxon>
        <taxon>Bacillaceae</taxon>
        <taxon>Bacillus</taxon>
        <taxon>Bacillus cereus group</taxon>
    </lineage>
</organism>
<keyword id="KW-0067">ATP-binding</keyword>
<keyword id="KW-0238">DNA-binding</keyword>
<keyword id="KW-0479">Metal-binding</keyword>
<keyword id="KW-0547">Nucleotide-binding</keyword>
<keyword id="KW-0678">Repressor</keyword>
<keyword id="KW-0804">Transcription</keyword>
<keyword id="KW-0805">Transcription regulation</keyword>
<keyword id="KW-0862">Zinc</keyword>
<keyword id="KW-0863">Zinc-finger</keyword>
<evidence type="ECO:0000255" key="1">
    <source>
        <dbReference type="HAMAP-Rule" id="MF_00440"/>
    </source>
</evidence>